<proteinExistence type="inferred from homology"/>
<name>JANA_DROYA</name>
<comment type="function">
    <text evidence="1">JanA and janB regulate somatic sex differentiation.</text>
</comment>
<comment type="similarity">
    <text evidence="2">Belongs to the janus family.</text>
</comment>
<accession>P83753</accession>
<accession>Q9BH48</accession>
<gene>
    <name type="primary">janA</name>
</gene>
<keyword id="KW-0221">Differentiation</keyword>
<keyword id="KW-0726">Sexual differentiation</keyword>
<organism evidence="3">
    <name type="scientific">Drosophila yakuba</name>
    <name type="common">Fruit fly</name>
    <dbReference type="NCBI Taxonomy" id="7245"/>
    <lineage>
        <taxon>Eukaryota</taxon>
        <taxon>Metazoa</taxon>
        <taxon>Ecdysozoa</taxon>
        <taxon>Arthropoda</taxon>
        <taxon>Hexapoda</taxon>
        <taxon>Insecta</taxon>
        <taxon>Pterygota</taxon>
        <taxon>Neoptera</taxon>
        <taxon>Endopterygota</taxon>
        <taxon>Diptera</taxon>
        <taxon>Brachycera</taxon>
        <taxon>Muscomorpha</taxon>
        <taxon>Ephydroidea</taxon>
        <taxon>Drosophilidae</taxon>
        <taxon>Drosophila</taxon>
        <taxon>Sophophora</taxon>
    </lineage>
</organism>
<sequence>MNRLQLFSKGLRLIHKMSEEALAGVPLVHISPEGIFKYVLINVIDGGDASKAVVRGFDDCTWHADIFDREEEVFKKLGLRAECPGGGRIEHNPEKKYLKVYGYSQGFGKADHAQTKRILATKYPDYTIETSDEGY</sequence>
<evidence type="ECO:0000250" key="1"/>
<evidence type="ECO:0000305" key="2"/>
<evidence type="ECO:0000312" key="3">
    <source>
        <dbReference type="EMBL" id="AAG50362.1"/>
    </source>
</evidence>
<protein>
    <recommendedName>
        <fullName>Sex-regulated protein janus-A</fullName>
    </recommendedName>
</protein>
<feature type="chain" id="PRO_0000206163" description="Sex-regulated protein janus-A">
    <location>
        <begin position="1"/>
        <end position="135"/>
    </location>
</feature>
<feature type="active site" description="Proton acceptor" evidence="1">
    <location>
        <position position="63"/>
    </location>
</feature>
<feature type="binding site" evidence="1">
    <location>
        <position position="37"/>
    </location>
    <ligand>
        <name>substrate</name>
    </ligand>
</feature>
<feature type="binding site" evidence="1">
    <location>
        <begin position="104"/>
        <end position="106"/>
    </location>
    <ligand>
        <name>substrate</name>
    </ligand>
</feature>
<dbReference type="EMBL" id="AY013341">
    <property type="protein sequence ID" value="AAG50362.1"/>
    <property type="molecule type" value="Genomic_DNA"/>
</dbReference>
<dbReference type="SMR" id="P83753"/>
<dbReference type="eggNOG" id="ENOG502S4DR">
    <property type="taxonomic scope" value="Eukaryota"/>
</dbReference>
<dbReference type="OrthoDB" id="10249612at2759"/>
<dbReference type="GO" id="GO:0005829">
    <property type="term" value="C:cytosol"/>
    <property type="evidence" value="ECO:0007669"/>
    <property type="project" value="TreeGrafter"/>
</dbReference>
<dbReference type="GO" id="GO:0101006">
    <property type="term" value="F:protein histidine phosphatase activity"/>
    <property type="evidence" value="ECO:0007669"/>
    <property type="project" value="TreeGrafter"/>
</dbReference>
<dbReference type="GO" id="GO:0030154">
    <property type="term" value="P:cell differentiation"/>
    <property type="evidence" value="ECO:0007669"/>
    <property type="project" value="UniProtKB-KW"/>
</dbReference>
<dbReference type="GO" id="GO:0007548">
    <property type="term" value="P:sex differentiation"/>
    <property type="evidence" value="ECO:0000250"/>
    <property type="project" value="UniProtKB"/>
</dbReference>
<dbReference type="FunFam" id="3.50.20.20:FF:000001">
    <property type="entry name" value="14 kDa phosphohistidine phosphatase"/>
    <property type="match status" value="1"/>
</dbReference>
<dbReference type="Gene3D" id="3.50.20.20">
    <property type="entry name" value="Janus/Ocnus"/>
    <property type="match status" value="1"/>
</dbReference>
<dbReference type="InterPro" id="IPR007702">
    <property type="entry name" value="Janus"/>
</dbReference>
<dbReference type="InterPro" id="IPR038596">
    <property type="entry name" value="Janus_sf"/>
</dbReference>
<dbReference type="PANTHER" id="PTHR12258:SF5">
    <property type="entry name" value="BCDNA.GH02250-RELATED"/>
    <property type="match status" value="1"/>
</dbReference>
<dbReference type="PANTHER" id="PTHR12258">
    <property type="entry name" value="JANUS-A/JANUS-B"/>
    <property type="match status" value="1"/>
</dbReference>
<dbReference type="Pfam" id="PF05005">
    <property type="entry name" value="Ocnus"/>
    <property type="match status" value="1"/>
</dbReference>
<dbReference type="SUPFAM" id="SSF143724">
    <property type="entry name" value="PHP14-like"/>
    <property type="match status" value="1"/>
</dbReference>
<reference evidence="2" key="1">
    <citation type="journal article" date="2001" name="Mol. Biol. Evol.">
        <title>Molecular evolution of the ocnus and janus genes in the Drosophila melanogaster species subgroup.</title>
        <authorList>
            <person name="Parsch J."/>
            <person name="Meiklejohn C.D."/>
            <person name="Hauschteck-Jungen E."/>
            <person name="Hunziker P."/>
            <person name="Hartl D.L."/>
        </authorList>
    </citation>
    <scope>NUCLEOTIDE SEQUENCE [GENOMIC DNA]</scope>
</reference>